<organism>
    <name type="scientific">Cenarchaeum symbiosum (strain A)</name>
    <dbReference type="NCBI Taxonomy" id="414004"/>
    <lineage>
        <taxon>Archaea</taxon>
        <taxon>Nitrososphaerota</taxon>
        <taxon>Candidatus Cenarchaeales</taxon>
        <taxon>Candidatus Cenarchaeaceae</taxon>
        <taxon>Candidatus Cenarchaeum</taxon>
    </lineage>
</organism>
<sequence length="221" mass="23815">MDIFKYDVYRGPNIGIYTSANDEKIFLPRGFAKAKAARLEGYLGAEALYTSVANTRLMGTLMVLNNSGIIMPSTISEIEYEFYKKHTDLNVVVLDTKFTALGNMISVNDRGGVVSPVFPREEVRIIADALGIEVIQRRIAGYNQVGAMMVATSGGGIIHPETDGEDVKRISEVMGVHMEPATINGGIPFVSSGLLANKKSVVAGSFTSGPEIMMLTRAFAG</sequence>
<reference key="1">
    <citation type="journal article" date="2006" name="Proc. Natl. Acad. Sci. U.S.A.">
        <title>Genomic analysis of the uncultivated marine crenarchaeote Cenarchaeum symbiosum.</title>
        <authorList>
            <person name="Hallam S.J."/>
            <person name="Konstantinidis K.T."/>
            <person name="Putnam N."/>
            <person name="Schleper C."/>
            <person name="Watanabe Y."/>
            <person name="Sugahara J."/>
            <person name="Preston C."/>
            <person name="de la Torre J."/>
            <person name="Richardson P.M."/>
            <person name="DeLong E.F."/>
        </authorList>
    </citation>
    <scope>NUCLEOTIDE SEQUENCE [LARGE SCALE GENOMIC DNA]</scope>
    <source>
        <strain>A</strain>
    </source>
</reference>
<accession>A0RYC3</accession>
<name>IF6_CENSY</name>
<gene>
    <name evidence="1" type="primary">eif6</name>
    <name type="ordered locus">CENSYa_1729</name>
</gene>
<proteinExistence type="inferred from homology"/>
<dbReference type="EMBL" id="DP000238">
    <property type="protein sequence ID" value="ABK78340.1"/>
    <property type="molecule type" value="Genomic_DNA"/>
</dbReference>
<dbReference type="SMR" id="A0RYC3"/>
<dbReference type="STRING" id="414004.CENSYa_1729"/>
<dbReference type="EnsemblBacteria" id="ABK78340">
    <property type="protein sequence ID" value="ABK78340"/>
    <property type="gene ID" value="CENSYa_1729"/>
</dbReference>
<dbReference type="KEGG" id="csy:CENSYa_1729"/>
<dbReference type="HOGENOM" id="CLU_071894_1_0_2"/>
<dbReference type="Proteomes" id="UP000000758">
    <property type="component" value="Chromosome"/>
</dbReference>
<dbReference type="GO" id="GO:0043022">
    <property type="term" value="F:ribosome binding"/>
    <property type="evidence" value="ECO:0007669"/>
    <property type="project" value="InterPro"/>
</dbReference>
<dbReference type="GO" id="GO:0003743">
    <property type="term" value="F:translation initiation factor activity"/>
    <property type="evidence" value="ECO:0007669"/>
    <property type="project" value="UniProtKB-UniRule"/>
</dbReference>
<dbReference type="GO" id="GO:0042256">
    <property type="term" value="P:cytosolic ribosome assembly"/>
    <property type="evidence" value="ECO:0007669"/>
    <property type="project" value="InterPro"/>
</dbReference>
<dbReference type="Gene3D" id="3.75.10.10">
    <property type="entry name" value="L-arginine/glycine Amidinotransferase, Chain A"/>
    <property type="match status" value="1"/>
</dbReference>
<dbReference type="HAMAP" id="MF_00032">
    <property type="entry name" value="eIF_6"/>
    <property type="match status" value="1"/>
</dbReference>
<dbReference type="InterPro" id="IPR002769">
    <property type="entry name" value="eIF6"/>
</dbReference>
<dbReference type="NCBIfam" id="TIGR00323">
    <property type="entry name" value="eIF-6"/>
    <property type="match status" value="1"/>
</dbReference>
<dbReference type="PANTHER" id="PTHR10784">
    <property type="entry name" value="TRANSLATION INITIATION FACTOR 6"/>
    <property type="match status" value="1"/>
</dbReference>
<dbReference type="Pfam" id="PF01912">
    <property type="entry name" value="eIF-6"/>
    <property type="match status" value="1"/>
</dbReference>
<dbReference type="SMART" id="SM00654">
    <property type="entry name" value="eIF6"/>
    <property type="match status" value="1"/>
</dbReference>
<dbReference type="SUPFAM" id="SSF55909">
    <property type="entry name" value="Pentein"/>
    <property type="match status" value="1"/>
</dbReference>
<comment type="function">
    <text evidence="1">Binds to the 50S ribosomal subunit and prevents its association with the 30S ribosomal subunit to form the 70S initiation complex.</text>
</comment>
<comment type="similarity">
    <text evidence="1">Belongs to the eIF-6 family.</text>
</comment>
<protein>
    <recommendedName>
        <fullName evidence="1">Translation initiation factor 6</fullName>
        <shortName evidence="1">aIF-6</shortName>
    </recommendedName>
</protein>
<evidence type="ECO:0000255" key="1">
    <source>
        <dbReference type="HAMAP-Rule" id="MF_00032"/>
    </source>
</evidence>
<keyword id="KW-0396">Initiation factor</keyword>
<keyword id="KW-0648">Protein biosynthesis</keyword>
<keyword id="KW-1185">Reference proteome</keyword>
<feature type="chain" id="PRO_1000071023" description="Translation initiation factor 6">
    <location>
        <begin position="1"/>
        <end position="221"/>
    </location>
</feature>